<comment type="function">
    <text evidence="1 2">G-protein coupled receptor for medium and long chain saturated and unsaturated fatty acids that plays an important role in glucose homeostasis. Fatty acid binding increases glucose-stimulated insulin secretion, and may also enhance the secretion of glucagon-like peptide 1 (GLP-1). May also play a role in bone homeostasis; receptor signaling activates pathways that inhibit osteoclast differentiation. Ligand binding leads to a conformation change that triggers signaling via G-proteins that activate phospholipase C, leading to an increase of the intracellular calcium concentration. Seems to act through a G(q) and G(i)-mediated pathway. Mediates the anti-inflammatory effects of omega-3 polyunsaturated fatty acids (PUFAs) via inhibition of NLRP3 inflammasome activation.</text>
</comment>
<comment type="subcellular location">
    <subcellularLocation>
        <location evidence="1">Cell membrane</location>
        <topology evidence="1">Multi-pass membrane protein</topology>
    </subcellularLocation>
</comment>
<comment type="similarity">
    <text evidence="4">Belongs to the G-protein coupled receptor 1 family.</text>
</comment>
<feature type="chain" id="PRO_0000069568" description="Free fatty acid receptor 1">
    <location>
        <begin position="1"/>
        <end position="300"/>
    </location>
</feature>
<feature type="topological domain" description="Extracellular" evidence="1 3">
    <location>
        <begin position="1"/>
        <end position="8"/>
    </location>
</feature>
<feature type="transmembrane region" description="Helical; Name=1" evidence="1 3">
    <location>
        <begin position="9"/>
        <end position="31"/>
    </location>
</feature>
<feature type="topological domain" description="Cytoplasmic" evidence="1 3">
    <location>
        <begin position="32"/>
        <end position="41"/>
    </location>
</feature>
<feature type="transmembrane region" description="Helical; Name=2" evidence="1 3">
    <location>
        <begin position="42"/>
        <end position="64"/>
    </location>
</feature>
<feature type="topological domain" description="Extracellular" evidence="1 3">
    <location>
        <begin position="65"/>
        <end position="79"/>
    </location>
</feature>
<feature type="transmembrane region" description="Helical; Name=3" evidence="1 3">
    <location>
        <begin position="80"/>
        <end position="101"/>
    </location>
</feature>
<feature type="topological domain" description="Cytoplasmic" evidence="1 3">
    <location>
        <begin position="102"/>
        <end position="121"/>
    </location>
</feature>
<feature type="transmembrane region" description="Helical; Name=4" evidence="1 3">
    <location>
        <begin position="122"/>
        <end position="142"/>
    </location>
</feature>
<feature type="topological domain" description="Extracellular" evidence="1 3">
    <location>
        <begin position="143"/>
        <end position="178"/>
    </location>
</feature>
<feature type="transmembrane region" description="Helical; Name=5" evidence="1 3">
    <location>
        <begin position="179"/>
        <end position="200"/>
    </location>
</feature>
<feature type="topological domain" description="Cytoplasmic" evidence="1 3">
    <location>
        <begin position="201"/>
        <end position="223"/>
    </location>
</feature>
<feature type="transmembrane region" description="Helical; Name=6" evidence="1 3">
    <location>
        <begin position="224"/>
        <end position="248"/>
    </location>
</feature>
<feature type="topological domain" description="Extracellular" evidence="1 3">
    <location>
        <begin position="249"/>
        <end position="256"/>
    </location>
</feature>
<feature type="transmembrane region" description="Helical; Name=7" evidence="1 3">
    <location>
        <begin position="257"/>
        <end position="279"/>
    </location>
</feature>
<feature type="topological domain" description="Cytoplasmic" evidence="1 3">
    <location>
        <begin position="280"/>
        <end position="300"/>
    </location>
</feature>
<feature type="site" description="Important for receptor activation" evidence="1">
    <location>
        <position position="145"/>
    </location>
</feature>
<feature type="site" description="Important for receptor activation" evidence="1">
    <location>
        <position position="172"/>
    </location>
</feature>
<feature type="glycosylation site" description="N-linked (GlcNAc...) asparagine" evidence="3">
    <location>
        <position position="155"/>
    </location>
</feature>
<feature type="disulfide bond" evidence="1">
    <location>
        <begin position="79"/>
        <end position="170"/>
    </location>
</feature>
<proteinExistence type="inferred from homology"/>
<organism>
    <name type="scientific">Macaca fascicularis</name>
    <name type="common">Crab-eating macaque</name>
    <name type="synonym">Cynomolgus monkey</name>
    <dbReference type="NCBI Taxonomy" id="9541"/>
    <lineage>
        <taxon>Eukaryota</taxon>
        <taxon>Metazoa</taxon>
        <taxon>Chordata</taxon>
        <taxon>Craniata</taxon>
        <taxon>Vertebrata</taxon>
        <taxon>Euteleostomi</taxon>
        <taxon>Mammalia</taxon>
        <taxon>Eutheria</taxon>
        <taxon>Euarchontoglires</taxon>
        <taxon>Primates</taxon>
        <taxon>Haplorrhini</taxon>
        <taxon>Catarrhini</taxon>
        <taxon>Cercopithecidae</taxon>
        <taxon>Cercopithecinae</taxon>
        <taxon>Macaca</taxon>
    </lineage>
</organism>
<accession>Q76JV1</accession>
<protein>
    <recommendedName>
        <fullName>Free fatty acid receptor 1</fullName>
    </recommendedName>
    <alternativeName>
        <fullName>G-protein coupled receptor 40</fullName>
    </alternativeName>
</protein>
<keyword id="KW-1003">Cell membrane</keyword>
<keyword id="KW-1015">Disulfide bond</keyword>
<keyword id="KW-0297">G-protein coupled receptor</keyword>
<keyword id="KW-0325">Glycoprotein</keyword>
<keyword id="KW-0472">Membrane</keyword>
<keyword id="KW-0675">Receptor</keyword>
<keyword id="KW-1185">Reference proteome</keyword>
<keyword id="KW-0807">Transducer</keyword>
<keyword id="KW-0812">Transmembrane</keyword>
<keyword id="KW-1133">Transmembrane helix</keyword>
<evidence type="ECO:0000250" key="1">
    <source>
        <dbReference type="UniProtKB" id="O14842"/>
    </source>
</evidence>
<evidence type="ECO:0000250" key="2">
    <source>
        <dbReference type="UniProtKB" id="Q76JU9"/>
    </source>
</evidence>
<evidence type="ECO:0000255" key="3"/>
<evidence type="ECO:0000255" key="4">
    <source>
        <dbReference type="PROSITE-ProRule" id="PRU00521"/>
    </source>
</evidence>
<reference key="1">
    <citation type="journal article" date="2003" name="Nature">
        <title>Free fatty acids regulate insulin secretion from pancreatic beta cells through GPR40.</title>
        <authorList>
            <person name="Itoh Y."/>
            <person name="Kawamata Y."/>
            <person name="Harada M."/>
            <person name="Kobayashi M."/>
            <person name="Fujii R."/>
            <person name="Fukusumi S."/>
            <person name="Ogi K."/>
            <person name="Hosoya M."/>
            <person name="Tanaka Y."/>
            <person name="Uejima H."/>
            <person name="Tanaka H."/>
            <person name="Maruyama M."/>
            <person name="Satoh R."/>
            <person name="Okubo S."/>
            <person name="Kizawa H."/>
            <person name="Komatsu H."/>
            <person name="Matsumura F."/>
            <person name="Noguchi Y."/>
            <person name="Shinohara T."/>
            <person name="Hinuma S."/>
            <person name="Fujisawa Y."/>
            <person name="Fujino M."/>
        </authorList>
    </citation>
    <scope>NUCLEOTIDE SEQUENCE [GENOMIC DNA]</scope>
</reference>
<dbReference type="EMBL" id="AB095743">
    <property type="protein sequence ID" value="BAC82553.1"/>
    <property type="molecule type" value="Genomic_DNA"/>
</dbReference>
<dbReference type="RefSeq" id="XP_005588904.1">
    <property type="nucleotide sequence ID" value="XM_005588847.2"/>
</dbReference>
<dbReference type="SMR" id="Q76JV1"/>
<dbReference type="STRING" id="9541.ENSMFAP00000011333"/>
<dbReference type="BindingDB" id="Q76JV1"/>
<dbReference type="ChEMBL" id="CHEMBL3751659"/>
<dbReference type="GlyCosmos" id="Q76JV1">
    <property type="glycosylation" value="1 site, No reported glycans"/>
</dbReference>
<dbReference type="GeneID" id="102132618"/>
<dbReference type="KEGG" id="mcf:102132618"/>
<dbReference type="CTD" id="2864"/>
<dbReference type="VEuPathDB" id="HostDB:ENSMFAG00000014904"/>
<dbReference type="eggNOG" id="ENOG502QVCS">
    <property type="taxonomic scope" value="Eukaryota"/>
</dbReference>
<dbReference type="OMA" id="CPAFALI"/>
<dbReference type="OrthoDB" id="13553at314294"/>
<dbReference type="Proteomes" id="UP000233100">
    <property type="component" value="Chromosome 19"/>
</dbReference>
<dbReference type="GO" id="GO:0005886">
    <property type="term" value="C:plasma membrane"/>
    <property type="evidence" value="ECO:0000250"/>
    <property type="project" value="UniProtKB"/>
</dbReference>
<dbReference type="GO" id="GO:0045125">
    <property type="term" value="F:bioactive lipid receptor activity"/>
    <property type="evidence" value="ECO:0000250"/>
    <property type="project" value="UniProtKB"/>
</dbReference>
<dbReference type="GO" id="GO:0042593">
    <property type="term" value="P:glucose homeostasis"/>
    <property type="evidence" value="ECO:0000250"/>
    <property type="project" value="UniProtKB"/>
</dbReference>
<dbReference type="GO" id="GO:0051928">
    <property type="term" value="P:positive regulation of calcium ion transport"/>
    <property type="evidence" value="ECO:0000250"/>
    <property type="project" value="UniProtKB"/>
</dbReference>
<dbReference type="GO" id="GO:0007204">
    <property type="term" value="P:positive regulation of cytosolic calcium ion concentration"/>
    <property type="evidence" value="ECO:0000250"/>
    <property type="project" value="UniProtKB"/>
</dbReference>
<dbReference type="GO" id="GO:0032024">
    <property type="term" value="P:positive regulation of insulin secretion"/>
    <property type="evidence" value="ECO:0000250"/>
    <property type="project" value="UniProtKB"/>
</dbReference>
<dbReference type="GO" id="GO:0070542">
    <property type="term" value="P:response to fatty acid"/>
    <property type="evidence" value="ECO:0000250"/>
    <property type="project" value="UniProtKB"/>
</dbReference>
<dbReference type="CDD" id="cd15169">
    <property type="entry name" value="7tmA_FFAR1"/>
    <property type="match status" value="1"/>
</dbReference>
<dbReference type="FunFam" id="1.20.1070.10:FF:000173">
    <property type="entry name" value="Free fatty acid receptor 1"/>
    <property type="match status" value="1"/>
</dbReference>
<dbReference type="Gene3D" id="1.20.1070.10">
    <property type="entry name" value="Rhodopsin 7-helix transmembrane proteins"/>
    <property type="match status" value="1"/>
</dbReference>
<dbReference type="InterPro" id="IPR000276">
    <property type="entry name" value="GPCR_Rhodpsn"/>
</dbReference>
<dbReference type="InterPro" id="IPR017452">
    <property type="entry name" value="GPCR_Rhodpsn_7TM"/>
</dbReference>
<dbReference type="InterPro" id="IPR013312">
    <property type="entry name" value="GPR40-rel_orph"/>
</dbReference>
<dbReference type="InterPro" id="IPR013313">
    <property type="entry name" value="GPR40_recept_FA"/>
</dbReference>
<dbReference type="PANTHER" id="PTHR45822:SF4">
    <property type="entry name" value="FREE FATTY ACID RECEPTOR 1"/>
    <property type="match status" value="1"/>
</dbReference>
<dbReference type="PANTHER" id="PTHR45822">
    <property type="entry name" value="FREE FATTY ACID RECEPTOR 2-RELATED"/>
    <property type="match status" value="1"/>
</dbReference>
<dbReference type="Pfam" id="PF00001">
    <property type="entry name" value="7tm_1"/>
    <property type="match status" value="1"/>
</dbReference>
<dbReference type="PRINTS" id="PR01905">
    <property type="entry name" value="FATTYACIDR"/>
</dbReference>
<dbReference type="PRINTS" id="PR00237">
    <property type="entry name" value="GPCRRHODOPSN"/>
</dbReference>
<dbReference type="PRINTS" id="PR01904">
    <property type="entry name" value="GPR40FAMILY"/>
</dbReference>
<dbReference type="SUPFAM" id="SSF81321">
    <property type="entry name" value="Family A G protein-coupled receptor-like"/>
    <property type="match status" value="1"/>
</dbReference>
<dbReference type="PROSITE" id="PS50262">
    <property type="entry name" value="G_PROTEIN_RECEP_F1_2"/>
    <property type="match status" value="1"/>
</dbReference>
<gene>
    <name type="primary">FFAR1</name>
    <name type="synonym">GPR40</name>
</gene>
<name>FFAR1_MACFA</name>
<sequence>MDLPPQLSFALYVAAFALGFPLNVLAIRGARAHARRRLTPSLVYALNLGCSDLLLTVSLPLKAVEALASGAWPLPASLCPVFGVAHFAPLYAGGGFLAALSAGRYLGAAFPLGYQAFRRPCYSWGVCAAIWALVLCHLGLVFVLEAPGGWLDHSNTSLGINTPVNGSPVCLEAWDPASAGPARFSLSLLLFFLPLAITAFCYVGCLRALAHSGLTHRRKLRAAWVAGGALLTLLLCVGPYNASNVASFLNPNLGGSWRKLGLITGAWSVVLNPLVTGYLGRGPGLKTVCAARTQGSTSQK</sequence>